<gene>
    <name evidence="1" type="primary">menG</name>
    <name type="synonym">menH</name>
</gene>
<organism>
    <name type="scientific">Geobacillus stearothermophilus</name>
    <name type="common">Bacillus stearothermophilus</name>
    <dbReference type="NCBI Taxonomy" id="1422"/>
    <lineage>
        <taxon>Bacteria</taxon>
        <taxon>Bacillati</taxon>
        <taxon>Bacillota</taxon>
        <taxon>Bacilli</taxon>
        <taxon>Bacillales</taxon>
        <taxon>Anoxybacillaceae</taxon>
        <taxon>Geobacillus</taxon>
    </lineage>
</organism>
<reference key="1">
    <citation type="journal article" date="1997" name="J. Biol. Chem.">
        <title>Identification of a novel gene cluster participating in menaquinone (vitamin K2) biosynthesis. Cloning and sequence determination of the 2-heptaprenyl-1,4-naphthoquinone methyltransferase gene of Bacillus stearothermophilus.</title>
        <authorList>
            <person name="Koike-Takeshita A."/>
            <person name="Koyama T."/>
            <person name="Ogura K."/>
        </authorList>
    </citation>
    <scope>NUCLEOTIDE SEQUENCE [GENOMIC DNA]</scope>
    <scope>FUNCTION</scope>
    <source>
        <strain>ATCC 10149 / DSM 6790 / CCM 5965 / CIP 105453 / JCM 11297 / NRS T15</strain>
    </source>
</reference>
<comment type="function">
    <text evidence="1 2">Methyltransferase required for the conversion of demethylmenaquinol (DMKH2) to menaquinol (MKH2).</text>
</comment>
<comment type="catalytic activity">
    <reaction evidence="1">
        <text>a 2-demethylmenaquinol + S-adenosyl-L-methionine = a menaquinol + S-adenosyl-L-homocysteine + H(+)</text>
        <dbReference type="Rhea" id="RHEA:42640"/>
        <dbReference type="Rhea" id="RHEA-COMP:9539"/>
        <dbReference type="Rhea" id="RHEA-COMP:9563"/>
        <dbReference type="ChEBI" id="CHEBI:15378"/>
        <dbReference type="ChEBI" id="CHEBI:18151"/>
        <dbReference type="ChEBI" id="CHEBI:55437"/>
        <dbReference type="ChEBI" id="CHEBI:57856"/>
        <dbReference type="ChEBI" id="CHEBI:59789"/>
        <dbReference type="EC" id="2.1.1.163"/>
    </reaction>
</comment>
<comment type="pathway">
    <text evidence="1">Quinol/quinone metabolism; menaquinone biosynthesis; menaquinol from 1,4-dihydroxy-2-naphthoate: step 2/2.</text>
</comment>
<comment type="similarity">
    <text evidence="1">Belongs to the class I-like SAM-binding methyltransferase superfamily. MenG/UbiE family.</text>
</comment>
<evidence type="ECO:0000255" key="1">
    <source>
        <dbReference type="HAMAP-Rule" id="MF_01813"/>
    </source>
</evidence>
<evidence type="ECO:0000269" key="2">
    <source>
    </source>
</evidence>
<name>MENG_GEOSE</name>
<sequence length="234" mass="27128">MRQSKEERVHRVFENISAHYDRMNSVISFRRHLKWRKDVMRRMNVQKGKKALDVCCGTADWTIALAEAVGPEGKVYGLDFSENMLKVGEQKVKARGLHNVKLIHGNAMQLPFPDNSFDYVTIGFGLRNVPDYMTVLKEMHRVTKPGGITVCLETSQPTLFGFRQLYYFYFRFIMPLFGKLLAKSYEEYSWLQESAREFPGRDELAEMFRAAGFVDVEVKPYTFGVAAMHLGYKR</sequence>
<keyword id="KW-0474">Menaquinone biosynthesis</keyword>
<keyword id="KW-0489">Methyltransferase</keyword>
<keyword id="KW-0949">S-adenosyl-L-methionine</keyword>
<keyword id="KW-0808">Transferase</keyword>
<feature type="chain" id="PRO_0000193246" description="Demethylmenaquinone methyltransferase">
    <location>
        <begin position="1"/>
        <end position="234"/>
    </location>
</feature>
<feature type="binding site" evidence="1">
    <location>
        <position position="58"/>
    </location>
    <ligand>
        <name>S-adenosyl-L-methionine</name>
        <dbReference type="ChEBI" id="CHEBI:59789"/>
    </ligand>
</feature>
<feature type="binding site" evidence="1">
    <location>
        <position position="79"/>
    </location>
    <ligand>
        <name>S-adenosyl-L-methionine</name>
        <dbReference type="ChEBI" id="CHEBI:59789"/>
    </ligand>
</feature>
<feature type="binding site" evidence="1">
    <location>
        <begin position="106"/>
        <end position="107"/>
    </location>
    <ligand>
        <name>S-adenosyl-L-methionine</name>
        <dbReference type="ChEBI" id="CHEBI:59789"/>
    </ligand>
</feature>
<protein>
    <recommendedName>
        <fullName evidence="1">Demethylmenaquinone methyltransferase</fullName>
        <ecNumber evidence="1">2.1.1.163</ecNumber>
    </recommendedName>
</protein>
<dbReference type="EC" id="2.1.1.163" evidence="1"/>
<dbReference type="EMBL" id="D87054">
    <property type="protein sequence ID" value="BAA32500.1"/>
    <property type="molecule type" value="Genomic_DNA"/>
</dbReference>
<dbReference type="PIR" id="T48892">
    <property type="entry name" value="T48892"/>
</dbReference>
<dbReference type="SMR" id="O86169"/>
<dbReference type="KEGG" id="ag:BAA32500"/>
<dbReference type="BioCyc" id="MetaCyc:MONOMER-13809"/>
<dbReference type="BRENDA" id="2.1.1.163">
    <property type="organism ID" value="623"/>
</dbReference>
<dbReference type="UniPathway" id="UPA00079">
    <property type="reaction ID" value="UER00169"/>
</dbReference>
<dbReference type="GO" id="GO:0043770">
    <property type="term" value="F:demethylmenaquinone methyltransferase activity"/>
    <property type="evidence" value="ECO:0007669"/>
    <property type="project" value="UniProtKB-UniRule"/>
</dbReference>
<dbReference type="GO" id="GO:0009234">
    <property type="term" value="P:menaquinone biosynthetic process"/>
    <property type="evidence" value="ECO:0007669"/>
    <property type="project" value="UniProtKB-UniRule"/>
</dbReference>
<dbReference type="GO" id="GO:0032259">
    <property type="term" value="P:methylation"/>
    <property type="evidence" value="ECO:0007669"/>
    <property type="project" value="UniProtKB-KW"/>
</dbReference>
<dbReference type="CDD" id="cd02440">
    <property type="entry name" value="AdoMet_MTases"/>
    <property type="match status" value="1"/>
</dbReference>
<dbReference type="FunFam" id="3.40.50.150:FF:000086">
    <property type="entry name" value="Demethylmenaquinone methyltransferase"/>
    <property type="match status" value="1"/>
</dbReference>
<dbReference type="Gene3D" id="3.40.50.150">
    <property type="entry name" value="Vaccinia Virus protein VP39"/>
    <property type="match status" value="1"/>
</dbReference>
<dbReference type="HAMAP" id="MF_01813">
    <property type="entry name" value="MenG_UbiE_methyltr"/>
    <property type="match status" value="1"/>
</dbReference>
<dbReference type="InterPro" id="IPR014122">
    <property type="entry name" value="MenG_heptapren"/>
</dbReference>
<dbReference type="InterPro" id="IPR029063">
    <property type="entry name" value="SAM-dependent_MTases_sf"/>
</dbReference>
<dbReference type="InterPro" id="IPR004033">
    <property type="entry name" value="UbiE/COQ5_MeTrFase"/>
</dbReference>
<dbReference type="InterPro" id="IPR023576">
    <property type="entry name" value="UbiE/COQ5_MeTrFase_CS"/>
</dbReference>
<dbReference type="NCBIfam" id="TIGR02752">
    <property type="entry name" value="MenG_heptapren"/>
    <property type="match status" value="1"/>
</dbReference>
<dbReference type="NCBIfam" id="TIGR01934">
    <property type="entry name" value="MenG_MenH_UbiE"/>
    <property type="match status" value="1"/>
</dbReference>
<dbReference type="NCBIfam" id="NF001243">
    <property type="entry name" value="PRK00216.1-4"/>
    <property type="match status" value="1"/>
</dbReference>
<dbReference type="NCBIfam" id="NF001244">
    <property type="entry name" value="PRK00216.1-5"/>
    <property type="match status" value="1"/>
</dbReference>
<dbReference type="PANTHER" id="PTHR43591:SF24">
    <property type="entry name" value="2-METHOXY-6-POLYPRENYL-1,4-BENZOQUINOL METHYLASE, MITOCHONDRIAL"/>
    <property type="match status" value="1"/>
</dbReference>
<dbReference type="PANTHER" id="PTHR43591">
    <property type="entry name" value="METHYLTRANSFERASE"/>
    <property type="match status" value="1"/>
</dbReference>
<dbReference type="Pfam" id="PF01209">
    <property type="entry name" value="Ubie_methyltran"/>
    <property type="match status" value="1"/>
</dbReference>
<dbReference type="SUPFAM" id="SSF53335">
    <property type="entry name" value="S-adenosyl-L-methionine-dependent methyltransferases"/>
    <property type="match status" value="1"/>
</dbReference>
<dbReference type="PROSITE" id="PS51608">
    <property type="entry name" value="SAM_MT_UBIE"/>
    <property type="match status" value="1"/>
</dbReference>
<dbReference type="PROSITE" id="PS01183">
    <property type="entry name" value="UBIE_1"/>
    <property type="match status" value="1"/>
</dbReference>
<dbReference type="PROSITE" id="PS01184">
    <property type="entry name" value="UBIE_2"/>
    <property type="match status" value="1"/>
</dbReference>
<proteinExistence type="inferred from homology"/>
<accession>O86169</accession>